<dbReference type="EC" id="1.11.1.12"/>
<dbReference type="EMBL" id="AJ250951">
    <property type="protein sequence ID" value="CAB96145.1"/>
    <property type="molecule type" value="mRNA"/>
</dbReference>
<dbReference type="EMBL" id="AJ315976">
    <property type="protein sequence ID" value="CAC83045.1"/>
    <property type="molecule type" value="Genomic_DNA"/>
</dbReference>
<dbReference type="SMR" id="Q9LEF0"/>
<dbReference type="PeroxiBase" id="2866">
    <property type="entry name" value="McGPx06"/>
</dbReference>
<dbReference type="GO" id="GO:0005829">
    <property type="term" value="C:cytosol"/>
    <property type="evidence" value="ECO:0007669"/>
    <property type="project" value="TreeGrafter"/>
</dbReference>
<dbReference type="GO" id="GO:0047066">
    <property type="term" value="F:phospholipid-hydroperoxide glutathione peroxidase activity"/>
    <property type="evidence" value="ECO:0007669"/>
    <property type="project" value="UniProtKB-EC"/>
</dbReference>
<dbReference type="GO" id="GO:0006979">
    <property type="term" value="P:response to oxidative stress"/>
    <property type="evidence" value="ECO:0007669"/>
    <property type="project" value="InterPro"/>
</dbReference>
<dbReference type="CDD" id="cd00340">
    <property type="entry name" value="GSH_Peroxidase"/>
    <property type="match status" value="1"/>
</dbReference>
<dbReference type="FunFam" id="3.40.30.10:FF:000025">
    <property type="entry name" value="Glutathione peroxidase"/>
    <property type="match status" value="1"/>
</dbReference>
<dbReference type="Gene3D" id="3.40.30.10">
    <property type="entry name" value="Glutaredoxin"/>
    <property type="match status" value="1"/>
</dbReference>
<dbReference type="InterPro" id="IPR000889">
    <property type="entry name" value="Glutathione_peroxidase"/>
</dbReference>
<dbReference type="InterPro" id="IPR029759">
    <property type="entry name" value="GPX_AS"/>
</dbReference>
<dbReference type="InterPro" id="IPR029760">
    <property type="entry name" value="GPX_CS"/>
</dbReference>
<dbReference type="InterPro" id="IPR036249">
    <property type="entry name" value="Thioredoxin-like_sf"/>
</dbReference>
<dbReference type="InterPro" id="IPR013766">
    <property type="entry name" value="Thioredoxin_domain"/>
</dbReference>
<dbReference type="PANTHER" id="PTHR11592">
    <property type="entry name" value="GLUTATHIONE PEROXIDASE"/>
    <property type="match status" value="1"/>
</dbReference>
<dbReference type="PANTHER" id="PTHR11592:SF118">
    <property type="entry name" value="PHOSPHOLIPID HYDROPEROXIDE GLUTATHIONE PEROXIDASE 6, MITOCHONDRIAL-RELATED"/>
    <property type="match status" value="1"/>
</dbReference>
<dbReference type="Pfam" id="PF00255">
    <property type="entry name" value="GSHPx"/>
    <property type="match status" value="1"/>
</dbReference>
<dbReference type="PIRSF" id="PIRSF000303">
    <property type="entry name" value="Glutathion_perox"/>
    <property type="match status" value="1"/>
</dbReference>
<dbReference type="PRINTS" id="PR01011">
    <property type="entry name" value="GLUTPROXDASE"/>
</dbReference>
<dbReference type="SUPFAM" id="SSF52833">
    <property type="entry name" value="Thioredoxin-like"/>
    <property type="match status" value="1"/>
</dbReference>
<dbReference type="PROSITE" id="PS00460">
    <property type="entry name" value="GLUTATHIONE_PEROXID_1"/>
    <property type="match status" value="1"/>
</dbReference>
<dbReference type="PROSITE" id="PS00763">
    <property type="entry name" value="GLUTATHIONE_PEROXID_2"/>
    <property type="match status" value="1"/>
</dbReference>
<dbReference type="PROSITE" id="PS51355">
    <property type="entry name" value="GLUTATHIONE_PEROXID_3"/>
    <property type="match status" value="1"/>
</dbReference>
<reference key="1">
    <citation type="submission" date="1999-11" db="EMBL/GenBank/DDBJ databases">
        <title>A putative phospholipid hydroperoxide glutathione peroxidase from the common ice plant Mesembryanthemum crystallinum.</title>
        <authorList>
            <person name="Kiefer M."/>
            <person name="Cushman J.C."/>
            <person name="Ratajczak R."/>
            <person name="Haag-Kerwer A."/>
        </authorList>
    </citation>
    <scope>NUCLEOTIDE SEQUENCE</scope>
    <source>
        <tissue>Leaf</tissue>
    </source>
</reference>
<keyword id="KW-0963">Cytoplasm</keyword>
<keyword id="KW-0560">Oxidoreductase</keyword>
<keyword id="KW-0575">Peroxidase</keyword>
<protein>
    <recommendedName>
        <fullName>Probable phospholipid hydroperoxide glutathione peroxidase</fullName>
        <shortName>PHGPx</shortName>
        <ecNumber>1.11.1.12</ecNumber>
    </recommendedName>
</protein>
<gene>
    <name type="primary">GPXMC1</name>
</gene>
<comment type="function">
    <text evidence="1">Protects cells and enzymes from oxidative damage, by catalyzing the reduction of hydrogen peroxide, lipid peroxides and organic hydroperoxide, by glutathione.</text>
</comment>
<comment type="catalytic activity">
    <reaction evidence="2">
        <text>a hydroperoxy polyunsaturated fatty acid + 2 glutathione = a hydroxy polyunsaturated fatty acid + glutathione disulfide + H2O</text>
        <dbReference type="Rhea" id="RHEA:19057"/>
        <dbReference type="ChEBI" id="CHEBI:15377"/>
        <dbReference type="ChEBI" id="CHEBI:57925"/>
        <dbReference type="ChEBI" id="CHEBI:58297"/>
        <dbReference type="ChEBI" id="CHEBI:131871"/>
        <dbReference type="ChEBI" id="CHEBI:134019"/>
        <dbReference type="EC" id="1.11.1.12"/>
    </reaction>
</comment>
<comment type="subcellular location">
    <subcellularLocation>
        <location evidence="3">Cytoplasm</location>
    </subcellularLocation>
</comment>
<comment type="similarity">
    <text evidence="3">Belongs to the glutathione peroxidase family.</text>
</comment>
<accession>Q9LEF0</accession>
<organism>
    <name type="scientific">Mesembryanthemum crystallinum</name>
    <name type="common">Common ice plant</name>
    <name type="synonym">Cryophytum crystallinum</name>
    <dbReference type="NCBI Taxonomy" id="3544"/>
    <lineage>
        <taxon>Eukaryota</taxon>
        <taxon>Viridiplantae</taxon>
        <taxon>Streptophyta</taxon>
        <taxon>Embryophyta</taxon>
        <taxon>Tracheophyta</taxon>
        <taxon>Spermatophyta</taxon>
        <taxon>Magnoliopsida</taxon>
        <taxon>eudicotyledons</taxon>
        <taxon>Gunneridae</taxon>
        <taxon>Pentapetalae</taxon>
        <taxon>Caryophyllales</taxon>
        <taxon>Aizoaceae</taxon>
        <taxon>Mesembryanthemum</taxon>
        <taxon>Mesembryanthemum subgen. Cryophytum</taxon>
    </lineage>
</organism>
<feature type="chain" id="PRO_0000066632" description="Probable phospholipid hydroperoxide glutathione peroxidase">
    <location>
        <begin position="1"/>
        <end position="170"/>
    </location>
</feature>
<feature type="active site" evidence="2">
    <location>
        <position position="44"/>
    </location>
</feature>
<proteinExistence type="evidence at transcript level"/>
<evidence type="ECO:0000250" key="1">
    <source>
        <dbReference type="UniProtKB" id="O70325"/>
    </source>
</evidence>
<evidence type="ECO:0000250" key="2">
    <source>
        <dbReference type="UniProtKB" id="P36968"/>
    </source>
</evidence>
<evidence type="ECO:0000305" key="3"/>
<sequence>MASQSTDQPKSIHDFIVKDARGNDVDLSIYKGKVLLIVNVASQCGLTNSNYPELTKLYEQYKDKGLEILAFPCNQFGNQEPGDNEQIMEFACTRFKAEFPIFDKVDVNGSNAAPVYKYLKSSKGGLFGDGIKWNFTKFLVDRDGKVVDRYAPTTSPASIEKDIKKLIGTS</sequence>
<name>GPX4_MESCR</name>